<organism>
    <name type="scientific">Staphylococcus epidermidis (strain ATCC 12228 / FDA PCI 1200)</name>
    <dbReference type="NCBI Taxonomy" id="176280"/>
    <lineage>
        <taxon>Bacteria</taxon>
        <taxon>Bacillati</taxon>
        <taxon>Bacillota</taxon>
        <taxon>Bacilli</taxon>
        <taxon>Bacillales</taxon>
        <taxon>Staphylococcaceae</taxon>
        <taxon>Staphylococcus</taxon>
    </lineage>
</organism>
<name>HRTB_STAES</name>
<feature type="chain" id="PRO_0000270530" description="Putative hemin transport system permease protein HrtB">
    <location>
        <begin position="1"/>
        <end position="350"/>
    </location>
</feature>
<feature type="transmembrane region" description="Helical" evidence="2">
    <location>
        <begin position="15"/>
        <end position="35"/>
    </location>
</feature>
<feature type="transmembrane region" description="Helical" evidence="2">
    <location>
        <begin position="233"/>
        <end position="253"/>
    </location>
</feature>
<feature type="transmembrane region" description="Helical" evidence="2">
    <location>
        <begin position="276"/>
        <end position="296"/>
    </location>
</feature>
<feature type="transmembrane region" description="Helical" evidence="2">
    <location>
        <begin position="315"/>
        <end position="335"/>
    </location>
</feature>
<keyword id="KW-1003">Cell membrane</keyword>
<keyword id="KW-0472">Membrane</keyword>
<keyword id="KW-0812">Transmembrane</keyword>
<keyword id="KW-1133">Transmembrane helix</keyword>
<keyword id="KW-0813">Transport</keyword>
<gene>
    <name type="primary">hrtB</name>
    <name type="ordered locus">SE_1940</name>
</gene>
<proteinExistence type="inferred from homology"/>
<accession>Q8CRA9</accession>
<evidence type="ECO:0000250" key="1"/>
<evidence type="ECO:0000255" key="2"/>
<evidence type="ECO:0000305" key="3"/>
<sequence length="350" mass="39189">MNLAWKEIKFYKFRFILIMFIIFLMAIMVLFISGLAQGLARENISIFDQIKGNQFVVQKMKEPQLEKSILSRSKQDNISKIIDEKPFKMAGKTFKINGNEENVMAINSVKNHQPNLKSGHYPKNGNQIAINEKLTAEGLYLDDKVKVKGDDTTYKVVGILKNTMYSHSNIVMMDQSKIEQSSNVATFYVTNQLSKSDKNKINHIKGVQTATTDDITSNIASYKAEQTPLDMMIISLYIITAIVLSAFFYVMTIQKTSEIGILKAIGITTKHLLTSLILQISMITFIGVAIAEVVIFLISQILPVSMPFHIDMHNIIIVLVVFMIVGLIGTSLSFIKLIKIDPIEAIGGGQ</sequence>
<dbReference type="EMBL" id="AE015929">
    <property type="protein sequence ID" value="AAO05581.1"/>
    <property type="molecule type" value="Genomic_DNA"/>
</dbReference>
<dbReference type="RefSeq" id="NP_765495.1">
    <property type="nucleotide sequence ID" value="NC_004461.1"/>
</dbReference>
<dbReference type="RefSeq" id="WP_002485529.1">
    <property type="nucleotide sequence ID" value="NZ_WBME01000017.1"/>
</dbReference>
<dbReference type="SMR" id="Q8CRA9"/>
<dbReference type="KEGG" id="sep:SE_1940"/>
<dbReference type="PATRIC" id="fig|176280.10.peg.1893"/>
<dbReference type="eggNOG" id="COG0577">
    <property type="taxonomic scope" value="Bacteria"/>
</dbReference>
<dbReference type="HOGENOM" id="CLU_060907_1_0_9"/>
<dbReference type="OrthoDB" id="384327at2"/>
<dbReference type="Proteomes" id="UP000001411">
    <property type="component" value="Chromosome"/>
</dbReference>
<dbReference type="GO" id="GO:0005886">
    <property type="term" value="C:plasma membrane"/>
    <property type="evidence" value="ECO:0007669"/>
    <property type="project" value="UniProtKB-SubCell"/>
</dbReference>
<dbReference type="InterPro" id="IPR051125">
    <property type="entry name" value="ABC-4/HrtB_transporter"/>
</dbReference>
<dbReference type="InterPro" id="IPR003838">
    <property type="entry name" value="ABC3_permease_C"/>
</dbReference>
<dbReference type="PANTHER" id="PTHR43738">
    <property type="entry name" value="ABC TRANSPORTER, MEMBRANE PROTEIN"/>
    <property type="match status" value="1"/>
</dbReference>
<dbReference type="PANTHER" id="PTHR43738:SF1">
    <property type="entry name" value="HEMIN TRANSPORT SYSTEM PERMEASE PROTEIN HRTB-RELATED"/>
    <property type="match status" value="1"/>
</dbReference>
<dbReference type="Pfam" id="PF02687">
    <property type="entry name" value="FtsX"/>
    <property type="match status" value="1"/>
</dbReference>
<comment type="function">
    <text evidence="1">Part of the ABC transporter complex hrt involved in hemin import. Responsible for the translocation of the substrate across the membrane (By similarity).</text>
</comment>
<comment type="subunit">
    <text evidence="1">The complex is composed of two ATP-binding proteins (HrtA), two transmembrane proteins (HrtB) and a solute-binding protein.</text>
</comment>
<comment type="subcellular location">
    <subcellularLocation>
        <location evidence="3">Cell membrane</location>
        <topology evidence="3">Multi-pass membrane protein</topology>
    </subcellularLocation>
</comment>
<comment type="similarity">
    <text evidence="3">Belongs to the ABC-4 integral membrane protein family. HrtB subfamily.</text>
</comment>
<protein>
    <recommendedName>
        <fullName>Putative hemin transport system permease protein HrtB</fullName>
    </recommendedName>
</protein>
<reference key="1">
    <citation type="journal article" date="2003" name="Mol. Microbiol.">
        <title>Genome-based analysis of virulence genes in a non-biofilm-forming Staphylococcus epidermidis strain (ATCC 12228).</title>
        <authorList>
            <person name="Zhang Y.-Q."/>
            <person name="Ren S.-X."/>
            <person name="Li H.-L."/>
            <person name="Wang Y.-X."/>
            <person name="Fu G."/>
            <person name="Yang J."/>
            <person name="Qin Z.-Q."/>
            <person name="Miao Y.-G."/>
            <person name="Wang W.-Y."/>
            <person name="Chen R.-S."/>
            <person name="Shen Y."/>
            <person name="Chen Z."/>
            <person name="Yuan Z.-H."/>
            <person name="Zhao G.-P."/>
            <person name="Qu D."/>
            <person name="Danchin A."/>
            <person name="Wen Y.-M."/>
        </authorList>
    </citation>
    <scope>NUCLEOTIDE SEQUENCE [LARGE SCALE GENOMIC DNA]</scope>
    <source>
        <strain>ATCC 12228 / FDA PCI 1200</strain>
    </source>
</reference>